<proteinExistence type="evidence at transcript level"/>
<gene>
    <name type="primary">Cyp3a18</name>
</gene>
<dbReference type="EC" id="1.14.14.1"/>
<dbReference type="EMBL" id="X79991">
    <property type="protein sequence ID" value="CAA56312.1"/>
    <property type="molecule type" value="mRNA"/>
</dbReference>
<dbReference type="EMBL" id="D38381">
    <property type="protein sequence ID" value="BAA22526.1"/>
    <property type="molecule type" value="mRNA"/>
</dbReference>
<dbReference type="PIR" id="PX0033">
    <property type="entry name" value="PX0033"/>
</dbReference>
<dbReference type="PIR" id="S52097">
    <property type="entry name" value="S52097"/>
</dbReference>
<dbReference type="RefSeq" id="NP_665725.1">
    <property type="nucleotide sequence ID" value="NM_145782.1"/>
</dbReference>
<dbReference type="SMR" id="Q64581"/>
<dbReference type="FunCoup" id="Q64581">
    <property type="interactions" value="56"/>
</dbReference>
<dbReference type="STRING" id="10116.ENSRNOP00000001285"/>
<dbReference type="PaxDb" id="10116-ENSRNOP00000001285"/>
<dbReference type="GeneID" id="252931"/>
<dbReference type="KEGG" id="rno:252931"/>
<dbReference type="AGR" id="RGD:628709"/>
<dbReference type="CTD" id="252931"/>
<dbReference type="RGD" id="628709">
    <property type="gene designation" value="Cyp3a18"/>
</dbReference>
<dbReference type="eggNOG" id="KOG0158">
    <property type="taxonomic scope" value="Eukaryota"/>
</dbReference>
<dbReference type="InParanoid" id="Q64581"/>
<dbReference type="PhylomeDB" id="Q64581"/>
<dbReference type="Reactome" id="R-RNO-211945">
    <property type="pathway name" value="Phase I - Functionalization of compounds"/>
</dbReference>
<dbReference type="Reactome" id="R-RNO-211958">
    <property type="pathway name" value="Miscellaneous substrates"/>
</dbReference>
<dbReference type="Reactome" id="R-RNO-211981">
    <property type="pathway name" value="Xenobiotics"/>
</dbReference>
<dbReference type="Reactome" id="R-RNO-5423646">
    <property type="pathway name" value="Aflatoxin activation and detoxification"/>
</dbReference>
<dbReference type="Reactome" id="R-RNO-9027307">
    <property type="pathway name" value="Biosynthesis of maresin-like SPMs"/>
</dbReference>
<dbReference type="Reactome" id="R-RNO-9749641">
    <property type="pathway name" value="Aspirin ADME"/>
</dbReference>
<dbReference type="Reactome" id="R-RNO-9754706">
    <property type="pathway name" value="Atorvastatin ADME"/>
</dbReference>
<dbReference type="Reactome" id="R-RNO-9757110">
    <property type="pathway name" value="Prednisone ADME"/>
</dbReference>
<dbReference type="PRO" id="PR:Q64581"/>
<dbReference type="Proteomes" id="UP000002494">
    <property type="component" value="Unplaced"/>
</dbReference>
<dbReference type="GO" id="GO:0005789">
    <property type="term" value="C:endoplasmic reticulum membrane"/>
    <property type="evidence" value="ECO:0007669"/>
    <property type="project" value="UniProtKB-SubCell"/>
</dbReference>
<dbReference type="GO" id="GO:0020037">
    <property type="term" value="F:heme binding"/>
    <property type="evidence" value="ECO:0007669"/>
    <property type="project" value="InterPro"/>
</dbReference>
<dbReference type="GO" id="GO:0005506">
    <property type="term" value="F:iron ion binding"/>
    <property type="evidence" value="ECO:0007669"/>
    <property type="project" value="InterPro"/>
</dbReference>
<dbReference type="GO" id="GO:0008390">
    <property type="term" value="F:testosterone 16-alpha-hydroxylase activity"/>
    <property type="evidence" value="ECO:0000314"/>
    <property type="project" value="RGD"/>
</dbReference>
<dbReference type="GO" id="GO:0050649">
    <property type="term" value="F:testosterone 6-beta-hydroxylase activity"/>
    <property type="evidence" value="ECO:0000314"/>
    <property type="project" value="RGD"/>
</dbReference>
<dbReference type="GO" id="GO:0070989">
    <property type="term" value="P:oxidative demethylation"/>
    <property type="evidence" value="ECO:0000318"/>
    <property type="project" value="GO_Central"/>
</dbReference>
<dbReference type="GO" id="GO:0008202">
    <property type="term" value="P:steroid metabolic process"/>
    <property type="evidence" value="ECO:0000318"/>
    <property type="project" value="GO_Central"/>
</dbReference>
<dbReference type="CDD" id="cd20650">
    <property type="entry name" value="CYP3A"/>
    <property type="match status" value="1"/>
</dbReference>
<dbReference type="FunFam" id="1.10.630.10:FF:000182">
    <property type="entry name" value="Cytochrome P450 3A4"/>
    <property type="match status" value="1"/>
</dbReference>
<dbReference type="Gene3D" id="1.10.630.10">
    <property type="entry name" value="Cytochrome P450"/>
    <property type="match status" value="1"/>
</dbReference>
<dbReference type="InterPro" id="IPR001128">
    <property type="entry name" value="Cyt_P450"/>
</dbReference>
<dbReference type="InterPro" id="IPR017972">
    <property type="entry name" value="Cyt_P450_CS"/>
</dbReference>
<dbReference type="InterPro" id="IPR008072">
    <property type="entry name" value="Cyt_P450_E_CYP3A"/>
</dbReference>
<dbReference type="InterPro" id="IPR002402">
    <property type="entry name" value="Cyt_P450_E_grp-II"/>
</dbReference>
<dbReference type="InterPro" id="IPR036396">
    <property type="entry name" value="Cyt_P450_sf"/>
</dbReference>
<dbReference type="InterPro" id="IPR050705">
    <property type="entry name" value="Cytochrome_P450_3A"/>
</dbReference>
<dbReference type="PANTHER" id="PTHR24302:SF8">
    <property type="entry name" value="CYTOCHROME P450 3A-RELATED"/>
    <property type="match status" value="1"/>
</dbReference>
<dbReference type="PANTHER" id="PTHR24302">
    <property type="entry name" value="CYTOCHROME P450 FAMILY 3"/>
    <property type="match status" value="1"/>
</dbReference>
<dbReference type="Pfam" id="PF00067">
    <property type="entry name" value="p450"/>
    <property type="match status" value="1"/>
</dbReference>
<dbReference type="PRINTS" id="PR00464">
    <property type="entry name" value="EP450II"/>
</dbReference>
<dbReference type="PRINTS" id="PR01689">
    <property type="entry name" value="EP450IICYP3A"/>
</dbReference>
<dbReference type="PRINTS" id="PR00385">
    <property type="entry name" value="P450"/>
</dbReference>
<dbReference type="SUPFAM" id="SSF48264">
    <property type="entry name" value="Cytochrome P450"/>
    <property type="match status" value="1"/>
</dbReference>
<dbReference type="PROSITE" id="PS00086">
    <property type="entry name" value="CYTOCHROME_P450"/>
    <property type="match status" value="1"/>
</dbReference>
<organism>
    <name type="scientific">Rattus norvegicus</name>
    <name type="common">Rat</name>
    <dbReference type="NCBI Taxonomy" id="10116"/>
    <lineage>
        <taxon>Eukaryota</taxon>
        <taxon>Metazoa</taxon>
        <taxon>Chordata</taxon>
        <taxon>Craniata</taxon>
        <taxon>Vertebrata</taxon>
        <taxon>Euteleostomi</taxon>
        <taxon>Mammalia</taxon>
        <taxon>Eutheria</taxon>
        <taxon>Euarchontoglires</taxon>
        <taxon>Glires</taxon>
        <taxon>Rodentia</taxon>
        <taxon>Myomorpha</taxon>
        <taxon>Muroidea</taxon>
        <taxon>Muridae</taxon>
        <taxon>Murinae</taxon>
        <taxon>Rattus</taxon>
    </lineage>
</organism>
<sequence length="497" mass="57307">MEIIPNLSIETWVLLATSLMLFYIYGTYSHGLFKKLGIPGPKPVPLFGTIFNYGDGMWKFDDDCYKKYGKIWGFYEGPQPFLAIMDPEIIKMVLVKECYSVFTNRRCFGPMGFMKKAITMSEDEEWKRLRTILSPTFTSGKLKEMFPLMRQYGDTLLKNLRREEAKGEPINMKDIFGAYSMDVITGTSFGVNVDSLNNPQDPFVQKAKKILKFQIFDPFLLSVVLFPFLTPIYEMLNFSIFPRQSMNFFKKFVKTMKKNRLDSNQKNRVDFLQLMMNTQNSKGQESQKALSDLEMAAQAIIFIFGGYDATSTSISFIMYELATRPNVQKKLQNEIDRALPNKAPVTYDALMEMEYLDMVVNESLRLYPIATRLDRVSKKDVEINGVFIPKGTVVTIPIYPLHRNPEYWLEPEEFNPERFSKENKGSIDPYVYLPFGNGPRNCIGMRFALISMKLAVIGVLQNFNIQPCEKTQIPLKISRQPIFQPEGPIILKLVSRD</sequence>
<comment type="function">
    <text>Catalyzes 16-beta- and 6-alpha-hydroxylations of testosterone.</text>
</comment>
<comment type="catalytic activity">
    <reaction>
        <text>an organic molecule + reduced [NADPH--hemoprotein reductase] + O2 = an alcohol + oxidized [NADPH--hemoprotein reductase] + H2O + H(+)</text>
        <dbReference type="Rhea" id="RHEA:17149"/>
        <dbReference type="Rhea" id="RHEA-COMP:11964"/>
        <dbReference type="Rhea" id="RHEA-COMP:11965"/>
        <dbReference type="ChEBI" id="CHEBI:15377"/>
        <dbReference type="ChEBI" id="CHEBI:15378"/>
        <dbReference type="ChEBI" id="CHEBI:15379"/>
        <dbReference type="ChEBI" id="CHEBI:30879"/>
        <dbReference type="ChEBI" id="CHEBI:57618"/>
        <dbReference type="ChEBI" id="CHEBI:58210"/>
        <dbReference type="ChEBI" id="CHEBI:142491"/>
        <dbReference type="EC" id="1.14.14.1"/>
    </reaction>
</comment>
<comment type="cofactor">
    <cofactor evidence="1">
        <name>heme</name>
        <dbReference type="ChEBI" id="CHEBI:30413"/>
    </cofactor>
</comment>
<comment type="subcellular location">
    <subcellularLocation>
        <location>Endoplasmic reticulum membrane</location>
        <topology>Peripheral membrane protein</topology>
    </subcellularLocation>
    <subcellularLocation>
        <location>Microsome membrane</location>
        <topology>Peripheral membrane protein</topology>
    </subcellularLocation>
</comment>
<comment type="induction">
    <text>By pregnenolone-alpha-carbonitrile, dexamethasone, phenobarbital, and triacetyloleandomycin.</text>
</comment>
<comment type="similarity">
    <text evidence="2">Belongs to the cytochrome P450 family.</text>
</comment>
<feature type="chain" id="PRO_0000051801" description="Cytochrome P450 3A18">
    <location>
        <begin position="1"/>
        <end position="497"/>
    </location>
</feature>
<feature type="binding site" description="axial binding residue" evidence="1">
    <location>
        <position position="442"/>
    </location>
    <ligand>
        <name>heme</name>
        <dbReference type="ChEBI" id="CHEBI:30413"/>
    </ligand>
    <ligandPart>
        <name>Fe</name>
        <dbReference type="ChEBI" id="CHEBI:18248"/>
    </ligandPart>
</feature>
<evidence type="ECO:0000250" key="1"/>
<evidence type="ECO:0000305" key="2"/>
<accession>Q64581</accession>
<reference key="1">
    <citation type="journal article" date="1995" name="Biochim. Biophys. Acta">
        <title>A novel CYP3 gene from female rats.</title>
        <authorList>
            <person name="Strotkamp D."/>
            <person name="Roos P.H."/>
            <person name="Hanstein W.G."/>
        </authorList>
    </citation>
    <scope>NUCLEOTIDE SEQUENCE [MRNA]</scope>
    <source>
        <strain>Sprague-Dawley</strain>
        <tissue>Liver</tissue>
    </source>
</reference>
<reference key="2">
    <citation type="journal article" date="1996" name="Pharmacogenetics">
        <title>Isolation and characterization of a new rat P450 (CYP3A18) cDNA encoding P450(6)beta-2 catalyzing testosterone 6 beta- and 16 alpha-hydroxylations.</title>
        <authorList>
            <person name="Nagata K."/>
            <person name="Murayama N."/>
            <person name="Miyata M."/>
            <person name="Shimada M."/>
            <person name="Urahashi A."/>
            <person name="Yamazoe Y."/>
            <person name="Kato R."/>
        </authorList>
    </citation>
    <scope>NUCLEOTIDE SEQUENCE [MRNA]</scope>
    <source>
        <strain>Sprague-Dawley</strain>
        <tissue>Liver</tissue>
    </source>
</reference>
<keyword id="KW-0256">Endoplasmic reticulum</keyword>
<keyword id="KW-0349">Heme</keyword>
<keyword id="KW-0408">Iron</keyword>
<keyword id="KW-0472">Membrane</keyword>
<keyword id="KW-0479">Metal-binding</keyword>
<keyword id="KW-0492">Microsome</keyword>
<keyword id="KW-0503">Monooxygenase</keyword>
<keyword id="KW-0560">Oxidoreductase</keyword>
<keyword id="KW-1185">Reference proteome</keyword>
<name>CP3AI_RAT</name>
<protein>
    <recommendedName>
        <fullName>Cytochrome P450 3A18</fullName>
        <ecNumber>1.14.14.1</ecNumber>
    </recommendedName>
    <alternativeName>
        <fullName>CYPIIIA18</fullName>
    </alternativeName>
    <alternativeName>
        <fullName>Cytochrome P450(6)beta-2</fullName>
    </alternativeName>
</protein>